<dbReference type="EMBL" id="CP000077">
    <property type="protein sequence ID" value="AAY80707.1"/>
    <property type="molecule type" value="Genomic_DNA"/>
</dbReference>
<dbReference type="RefSeq" id="WP_011278209.1">
    <property type="nucleotide sequence ID" value="NC_007181.1"/>
</dbReference>
<dbReference type="PDB" id="2W2U">
    <property type="method" value="X-ray"/>
    <property type="resolution" value="2.20 A"/>
    <property type="chains" value="C/D=182-195"/>
</dbReference>
<dbReference type="PDBsum" id="2W2U"/>
<dbReference type="SMR" id="Q4J924"/>
<dbReference type="STRING" id="330779.Saci_1373"/>
<dbReference type="TCDB" id="3.A.31.1.3">
    <property type="family name" value="the endosomal sorting complexes required for transport iii (escrt-iii) family"/>
</dbReference>
<dbReference type="GeneID" id="14551875"/>
<dbReference type="GeneID" id="78441719"/>
<dbReference type="KEGG" id="sai:Saci_1373"/>
<dbReference type="PATRIC" id="fig|330779.12.peg.1325"/>
<dbReference type="eggNOG" id="arCOG00453">
    <property type="taxonomic scope" value="Archaea"/>
</dbReference>
<dbReference type="HOGENOM" id="CLU_1072074_0_0_2"/>
<dbReference type="EvolutionaryTrace" id="Q4J924"/>
<dbReference type="Proteomes" id="UP000001018">
    <property type="component" value="Chromosome"/>
</dbReference>
<dbReference type="GO" id="GO:0005737">
    <property type="term" value="C:cytoplasm"/>
    <property type="evidence" value="ECO:0007669"/>
    <property type="project" value="UniProtKB-KW"/>
</dbReference>
<dbReference type="GO" id="GO:0009295">
    <property type="term" value="C:nucleoid"/>
    <property type="evidence" value="ECO:0007669"/>
    <property type="project" value="UniProtKB-SubCell"/>
</dbReference>
<dbReference type="GO" id="GO:0051301">
    <property type="term" value="P:cell division"/>
    <property type="evidence" value="ECO:0007669"/>
    <property type="project" value="UniProtKB-KW"/>
</dbReference>
<dbReference type="Gene3D" id="6.10.140.1230">
    <property type="match status" value="1"/>
</dbReference>
<dbReference type="Gene3D" id="1.10.10.10">
    <property type="entry name" value="Winged helix-like DNA-binding domain superfamily/Winged helix DNA-binding domain"/>
    <property type="match status" value="1"/>
</dbReference>
<dbReference type="InterPro" id="IPR053654">
    <property type="entry name" value="Cell_Div_Complex_Comp"/>
</dbReference>
<dbReference type="InterPro" id="IPR036388">
    <property type="entry name" value="WH-like_DNA-bd_sf"/>
</dbReference>
<dbReference type="InterPro" id="IPR036390">
    <property type="entry name" value="WH_DNA-bd_sf"/>
</dbReference>
<dbReference type="NCBIfam" id="NF041008">
    <property type="entry name" value="cell_div_CdvB"/>
    <property type="match status" value="1"/>
</dbReference>
<dbReference type="SUPFAM" id="SSF46785">
    <property type="entry name" value="Winged helix' DNA-binding domain"/>
    <property type="match status" value="1"/>
</dbReference>
<evidence type="ECO:0000269" key="1">
    <source>
    </source>
</evidence>
<evidence type="ECO:0000269" key="2">
    <source>
    </source>
</evidence>
<evidence type="ECO:0000269" key="3">
    <source>
    </source>
</evidence>
<evidence type="ECO:0000303" key="4">
    <source>
    </source>
</evidence>
<evidence type="ECO:0000305" key="5"/>
<evidence type="ECO:0000305" key="6">
    <source>
    </source>
</evidence>
<evidence type="ECO:0000312" key="7">
    <source>
        <dbReference type="EMBL" id="AAY80707.1"/>
    </source>
</evidence>
<evidence type="ECO:0007744" key="8">
    <source>
        <dbReference type="PDB" id="2W2U"/>
    </source>
</evidence>
<keyword id="KW-0002">3D-structure</keyword>
<keyword id="KW-0131">Cell cycle</keyword>
<keyword id="KW-0132">Cell division</keyword>
<keyword id="KW-0963">Cytoplasm</keyword>
<keyword id="KW-1185">Reference proteome</keyword>
<organism>
    <name type="scientific">Sulfolobus acidocaldarius (strain ATCC 33909 / DSM 639 / JCM 8929 / NBRC 15157 / NCIMB 11770)</name>
    <dbReference type="NCBI Taxonomy" id="330779"/>
    <lineage>
        <taxon>Archaea</taxon>
        <taxon>Thermoproteota</taxon>
        <taxon>Thermoprotei</taxon>
        <taxon>Sulfolobales</taxon>
        <taxon>Sulfolobaceae</taxon>
        <taxon>Sulfolobus</taxon>
    </lineage>
</organism>
<gene>
    <name evidence="4" type="primary">cdvB</name>
    <name evidence="7" type="ordered locus">Saci_1373</name>
</gene>
<feature type="chain" id="PRO_0000438766" description="Cell division protein B">
    <location>
        <begin position="1"/>
        <end position="261"/>
    </location>
</feature>
<feature type="region of interest" description="Winged-helix-like fold" evidence="6">
    <location>
        <begin position="213"/>
        <end position="261"/>
    </location>
</feature>
<comment type="function">
    <text evidence="1 2 3">Part of a cell division machinery (PubMed:18987308, PubMed:19008417, PubMed:21255729). The CdvA, CdvB and CdvC proteins polymerize between segregating nucleoids and persist throughout cell division, forming a successively smaller structure during constriction (PubMed:18987308).</text>
</comment>
<comment type="subunit">
    <text evidence="2 3">Interacts with CdvA (PubMed:21255729). Interacts with CdvC (PubMed:19008417).</text>
</comment>
<comment type="subcellular location">
    <subcellularLocation>
        <location evidence="1 2">Cytoplasm</location>
        <location evidence="1 2">Nucleoid</location>
    </subcellularLocation>
    <text evidence="1 2">Forms, with CdvA, colocalized band-like structures between segregating nucleoids (PubMed:18987308). Localizes to the mid-cell in dividing cells (PubMed:19008417).</text>
</comment>
<comment type="induction">
    <text evidence="1 2">Induced around the genome segregation and cell division stages (PubMed:18987308). Down-regulated after UV irradiation, indicating division inhibition in response to DNA damage (PubMed:18987308). Expression is highest in dividing cells (PubMed:19008417).</text>
</comment>
<comment type="domain">
    <text evidence="3">The winged-helix-like (wH-like) C-terminal extension is necessary and sufficient for interaction with CdvA.</text>
</comment>
<sequence>MFDKLSIIFNSDRKRKVHLSKAITEISLKLKEQQDRLDEAIRRLRERDKDLFEKVIRSQIEGDIARATIYAQEISDIRKMIKIIYTAYLAIEKVRLKLDTVQELQGVSLVLFPVMRILGELKEQVRGIAPEVALALDSITSSVNSIAIETGALSEKTFVPTVADEQAKQIMEEAQKMAEVKVRELLPELPHPPSELPKRVAKQVQSSNKKSLSEDMILNYIKTTGGFIDVDYIAKNFDVSKDEVFNVLRRLEEKGLIVLEG</sequence>
<accession>Q4J924</accession>
<protein>
    <recommendedName>
        <fullName evidence="5">Cell division protein B</fullName>
    </recommendedName>
    <alternativeName>
        <fullName evidence="5">ESCRT-III homolog</fullName>
    </alternativeName>
</protein>
<name>CDVB_SULAC</name>
<proteinExistence type="evidence at protein level"/>
<reference key="1">
    <citation type="journal article" date="2005" name="J. Bacteriol.">
        <title>The genome of Sulfolobus acidocaldarius, a model organism of the Crenarchaeota.</title>
        <authorList>
            <person name="Chen L."/>
            <person name="Bruegger K."/>
            <person name="Skovgaard M."/>
            <person name="Redder P."/>
            <person name="She Q."/>
            <person name="Torarinsson E."/>
            <person name="Greve B."/>
            <person name="Awayez M."/>
            <person name="Zibat A."/>
            <person name="Klenk H.-P."/>
            <person name="Garrett R.A."/>
        </authorList>
    </citation>
    <scope>NUCLEOTIDE SEQUENCE [LARGE SCALE GENOMIC DNA]</scope>
    <source>
        <strain>ATCC 33909 / DSM 639 / JCM 8929 / NBRC 15157 / NCIMB 11770</strain>
    </source>
</reference>
<reference key="2">
    <citation type="journal article" date="2008" name="Proc. Natl. Acad. Sci. U.S.A.">
        <title>A unique cell division machinery in the Archaea.</title>
        <authorList>
            <person name="Lindaas A.C."/>
            <person name="Karlsson E.A."/>
            <person name="Lindgren M.T."/>
            <person name="Ettema T.J."/>
            <person name="Bernander R."/>
        </authorList>
    </citation>
    <scope>FUNCTION</scope>
    <scope>SUBCELLULAR LOCATION</scope>
    <scope>INDUCTION</scope>
    <source>
        <strain>ATCC 33909 / DSM 639 / JCM 8929 / NBRC 15157 / NCIMB 11770</strain>
    </source>
</reference>
<reference key="3">
    <citation type="journal article" date="2011" name="Mol. Cell">
        <title>Molecular and structural basis of ESCRT-III recruitment to membranes during archaeal cell division.</title>
        <authorList>
            <person name="Samson R.Y."/>
            <person name="Obita T."/>
            <person name="Hodgson B."/>
            <person name="Shaw M.K."/>
            <person name="Chong P.L."/>
            <person name="Williams R.L."/>
            <person name="Bell S.D."/>
        </authorList>
    </citation>
    <scope>FUNCTION</scope>
    <scope>INTERACTION WITH CDVA</scope>
    <scope>DOMAIN</scope>
    <source>
        <strain>ATCC 33909 / DSM 639 / JCM 8929 / NBRC 15157 / NCIMB 11770</strain>
    </source>
</reference>
<reference evidence="8" key="4">
    <citation type="journal article" date="2008" name="Science">
        <title>A role for the ESCRT system in cell division in archaea.</title>
        <authorList>
            <person name="Samson R.Y."/>
            <person name="Obita T."/>
            <person name="Freund S.M."/>
            <person name="Williams R.L."/>
            <person name="Bell S.D."/>
        </authorList>
    </citation>
    <scope>X-RAY CRYSTALLOGRAPHY (2.20 ANGSTROMS) OF 182-195</scope>
    <scope>FUNCTION</scope>
    <scope>SUBCELLULAR LOCATION</scope>
    <scope>INDUCTION</scope>
    <scope>INTERACTION WITH CDVC</scope>
</reference>